<comment type="function">
    <text evidence="2">With S4 and S5 plays an important role in translational accuracy.</text>
</comment>
<comment type="function">
    <text evidence="2">Interacts with and stabilizes bases of the 16S rRNA that are involved in tRNA selection in the A site and with the mRNA backbone. Located at the interface of the 30S and 50S subunits, it traverses the body of the 30S subunit contacting proteins on the other side and probably holding the rRNA structure together. The combined cluster of proteins S8, S12 and S17 appears to hold together the shoulder and platform of the 30S subunit.</text>
</comment>
<comment type="subunit">
    <text evidence="2">Part of the 30S ribosomal subunit. Contacts proteins S8 and S17. May interact with IF1 in the 30S initiation complex.</text>
</comment>
<comment type="similarity">
    <text evidence="2">Belongs to the universal ribosomal protein uS12 family.</text>
</comment>
<gene>
    <name evidence="2" type="primary">rpsL</name>
    <name type="ordered locus">BMA2637</name>
</gene>
<reference key="1">
    <citation type="journal article" date="2004" name="Proc. Natl. Acad. Sci. U.S.A.">
        <title>Structural flexibility in the Burkholderia mallei genome.</title>
        <authorList>
            <person name="Nierman W.C."/>
            <person name="DeShazer D."/>
            <person name="Kim H.S."/>
            <person name="Tettelin H."/>
            <person name="Nelson K.E."/>
            <person name="Feldblyum T.V."/>
            <person name="Ulrich R.L."/>
            <person name="Ronning C.M."/>
            <person name="Brinkac L.M."/>
            <person name="Daugherty S.C."/>
            <person name="Davidsen T.D."/>
            <person name="DeBoy R.T."/>
            <person name="Dimitrov G."/>
            <person name="Dodson R.J."/>
            <person name="Durkin A.S."/>
            <person name="Gwinn M.L."/>
            <person name="Haft D.H."/>
            <person name="Khouri H.M."/>
            <person name="Kolonay J.F."/>
            <person name="Madupu R."/>
            <person name="Mohammoud Y."/>
            <person name="Nelson W.C."/>
            <person name="Radune D."/>
            <person name="Romero C.M."/>
            <person name="Sarria S."/>
            <person name="Selengut J."/>
            <person name="Shamblin C."/>
            <person name="Sullivan S.A."/>
            <person name="White O."/>
            <person name="Yu Y."/>
            <person name="Zafar N."/>
            <person name="Zhou L."/>
            <person name="Fraser C.M."/>
        </authorList>
    </citation>
    <scope>NUCLEOTIDE SEQUENCE [LARGE SCALE GENOMIC DNA]</scope>
    <source>
        <strain>ATCC 23344</strain>
    </source>
</reference>
<accession>Q62GK0</accession>
<feature type="chain" id="PRO_0000146195" description="Small ribosomal subunit protein uS12">
    <location>
        <begin position="1"/>
        <end position="126"/>
    </location>
</feature>
<feature type="region of interest" description="Disordered" evidence="3">
    <location>
        <begin position="1"/>
        <end position="26"/>
    </location>
</feature>
<feature type="region of interest" description="Disordered" evidence="3">
    <location>
        <begin position="102"/>
        <end position="126"/>
    </location>
</feature>
<feature type="compositionally biased region" description="Basic residues" evidence="3">
    <location>
        <begin position="113"/>
        <end position="126"/>
    </location>
</feature>
<feature type="modified residue" description="3-methylthioaspartic acid" evidence="1">
    <location>
        <position position="89"/>
    </location>
</feature>
<dbReference type="EMBL" id="CP000010">
    <property type="protein sequence ID" value="AAU47875.1"/>
    <property type="molecule type" value="Genomic_DNA"/>
</dbReference>
<dbReference type="RefSeq" id="WP_004198362.1">
    <property type="nucleotide sequence ID" value="NC_006348.1"/>
</dbReference>
<dbReference type="RefSeq" id="YP_104171.1">
    <property type="nucleotide sequence ID" value="NC_006348.1"/>
</dbReference>
<dbReference type="SMR" id="Q62GK0"/>
<dbReference type="GeneID" id="92980324"/>
<dbReference type="KEGG" id="bma:BMA2637"/>
<dbReference type="PATRIC" id="fig|243160.12.peg.2708"/>
<dbReference type="eggNOG" id="COG0048">
    <property type="taxonomic scope" value="Bacteria"/>
</dbReference>
<dbReference type="HOGENOM" id="CLU_104295_1_2_4"/>
<dbReference type="Proteomes" id="UP000006693">
    <property type="component" value="Chromosome 1"/>
</dbReference>
<dbReference type="GO" id="GO:0015935">
    <property type="term" value="C:small ribosomal subunit"/>
    <property type="evidence" value="ECO:0007669"/>
    <property type="project" value="InterPro"/>
</dbReference>
<dbReference type="GO" id="GO:0019843">
    <property type="term" value="F:rRNA binding"/>
    <property type="evidence" value="ECO:0007669"/>
    <property type="project" value="UniProtKB-UniRule"/>
</dbReference>
<dbReference type="GO" id="GO:0003735">
    <property type="term" value="F:structural constituent of ribosome"/>
    <property type="evidence" value="ECO:0007669"/>
    <property type="project" value="InterPro"/>
</dbReference>
<dbReference type="GO" id="GO:0000049">
    <property type="term" value="F:tRNA binding"/>
    <property type="evidence" value="ECO:0007669"/>
    <property type="project" value="UniProtKB-UniRule"/>
</dbReference>
<dbReference type="GO" id="GO:0006412">
    <property type="term" value="P:translation"/>
    <property type="evidence" value="ECO:0007669"/>
    <property type="project" value="UniProtKB-UniRule"/>
</dbReference>
<dbReference type="CDD" id="cd03368">
    <property type="entry name" value="Ribosomal_S12"/>
    <property type="match status" value="1"/>
</dbReference>
<dbReference type="FunFam" id="2.40.50.140:FF:000001">
    <property type="entry name" value="30S ribosomal protein S12"/>
    <property type="match status" value="1"/>
</dbReference>
<dbReference type="Gene3D" id="2.40.50.140">
    <property type="entry name" value="Nucleic acid-binding proteins"/>
    <property type="match status" value="1"/>
</dbReference>
<dbReference type="HAMAP" id="MF_00403_B">
    <property type="entry name" value="Ribosomal_uS12_B"/>
    <property type="match status" value="1"/>
</dbReference>
<dbReference type="InterPro" id="IPR012340">
    <property type="entry name" value="NA-bd_OB-fold"/>
</dbReference>
<dbReference type="InterPro" id="IPR006032">
    <property type="entry name" value="Ribosomal_uS12"/>
</dbReference>
<dbReference type="InterPro" id="IPR005679">
    <property type="entry name" value="Ribosomal_uS12_bac"/>
</dbReference>
<dbReference type="NCBIfam" id="TIGR00981">
    <property type="entry name" value="rpsL_bact"/>
    <property type="match status" value="1"/>
</dbReference>
<dbReference type="PANTHER" id="PTHR11652">
    <property type="entry name" value="30S RIBOSOMAL PROTEIN S12 FAMILY MEMBER"/>
    <property type="match status" value="1"/>
</dbReference>
<dbReference type="Pfam" id="PF00164">
    <property type="entry name" value="Ribosom_S12_S23"/>
    <property type="match status" value="1"/>
</dbReference>
<dbReference type="PIRSF" id="PIRSF002133">
    <property type="entry name" value="Ribosomal_S12/S23"/>
    <property type="match status" value="1"/>
</dbReference>
<dbReference type="PRINTS" id="PR01034">
    <property type="entry name" value="RIBOSOMALS12"/>
</dbReference>
<dbReference type="SUPFAM" id="SSF50249">
    <property type="entry name" value="Nucleic acid-binding proteins"/>
    <property type="match status" value="1"/>
</dbReference>
<dbReference type="PROSITE" id="PS00055">
    <property type="entry name" value="RIBOSOMAL_S12"/>
    <property type="match status" value="1"/>
</dbReference>
<evidence type="ECO:0000250" key="1"/>
<evidence type="ECO:0000255" key="2">
    <source>
        <dbReference type="HAMAP-Rule" id="MF_00403"/>
    </source>
</evidence>
<evidence type="ECO:0000256" key="3">
    <source>
        <dbReference type="SAM" id="MobiDB-lite"/>
    </source>
</evidence>
<evidence type="ECO:0000305" key="4"/>
<sequence length="126" mass="13970">MPTINQLVRKGRASETTKSKSPALQDCPQRRGVCTRVYTTTPKKPNSALRKVAKVRLTNGFEVISYIGGEGHNLQEHSVVLIRGGRVKDLPGVRYHMVRGSLDTQGVKDRRQARSKYGAKRAKAAK</sequence>
<protein>
    <recommendedName>
        <fullName evidence="2">Small ribosomal subunit protein uS12</fullName>
    </recommendedName>
    <alternativeName>
        <fullName evidence="4">30S ribosomal protein S12</fullName>
    </alternativeName>
</protein>
<name>RS12_BURMA</name>
<proteinExistence type="inferred from homology"/>
<keyword id="KW-0488">Methylation</keyword>
<keyword id="KW-1185">Reference proteome</keyword>
<keyword id="KW-0687">Ribonucleoprotein</keyword>
<keyword id="KW-0689">Ribosomal protein</keyword>
<keyword id="KW-0694">RNA-binding</keyword>
<keyword id="KW-0699">rRNA-binding</keyword>
<keyword id="KW-0820">tRNA-binding</keyword>
<organism>
    <name type="scientific">Burkholderia mallei (strain ATCC 23344)</name>
    <dbReference type="NCBI Taxonomy" id="243160"/>
    <lineage>
        <taxon>Bacteria</taxon>
        <taxon>Pseudomonadati</taxon>
        <taxon>Pseudomonadota</taxon>
        <taxon>Betaproteobacteria</taxon>
        <taxon>Burkholderiales</taxon>
        <taxon>Burkholderiaceae</taxon>
        <taxon>Burkholderia</taxon>
        <taxon>pseudomallei group</taxon>
    </lineage>
</organism>